<evidence type="ECO:0000255" key="1">
    <source>
        <dbReference type="PROSITE-ProRule" id="PRU00507"/>
    </source>
</evidence>
<evidence type="ECO:0000256" key="2">
    <source>
        <dbReference type="SAM" id="MobiDB-lite"/>
    </source>
</evidence>
<evidence type="ECO:0000269" key="3">
    <source>
    </source>
</evidence>
<evidence type="ECO:0000269" key="4">
    <source>
    </source>
</evidence>
<evidence type="ECO:0000269" key="5">
    <source>
    </source>
</evidence>
<evidence type="ECO:0000269" key="6">
    <source>
    </source>
</evidence>
<evidence type="ECO:0000269" key="7">
    <source>
    </source>
</evidence>
<evidence type="ECO:0000269" key="8">
    <source>
    </source>
</evidence>
<evidence type="ECO:0000269" key="9">
    <source>
    </source>
</evidence>
<evidence type="ECO:0000269" key="10">
    <source ref="5"/>
</evidence>
<evidence type="ECO:0000305" key="11"/>
<evidence type="ECO:0007744" key="12">
    <source>
    </source>
</evidence>
<evidence type="ECO:0007744" key="13">
    <source>
    </source>
</evidence>
<keyword id="KW-0007">Acetylation</keyword>
<keyword id="KW-0963">Cytoplasm</keyword>
<keyword id="KW-0903">Direct protein sequencing</keyword>
<keyword id="KW-0539">Nucleus</keyword>
<keyword id="KW-0597">Phosphoprotein</keyword>
<keyword id="KW-0653">Protein transport</keyword>
<keyword id="KW-1185">Reference proteome</keyword>
<keyword id="KW-0813">Transport</keyword>
<keyword id="KW-0832">Ubl conjugation</keyword>
<comment type="function">
    <text evidence="3 4 5 6 8 9">Component of the nascent polypeptide-associated complex (NAC), a dynamic component of the ribosomal exit tunnel, protecting the emerging polypeptides from interaction with other cytoplasmic proteins to ensure appropriate nascent protein targeting. The NAC complex also promotes mitochondrial protein import by enhancing productive ribosome interactions with the outer mitochondrial membrane and blocks the inappropriate interaction of ribosomes translating non-secretory nascent polypeptides with translocation sites in the membrane of the endoplasmic reticulum. EGD2 may also be involved in transcription regulation.</text>
</comment>
<comment type="subunit">
    <text>Part of the nascent polypeptide-associated complex (NAC), consisting of EGD2 and either EGD1 or BTT1. NAC associates with ribosomes via EGD1 or BTT1, and with the CCR4-NOT complex.</text>
</comment>
<comment type="interaction">
    <interactant intactId="EBI-6379">
        <id>P38879</id>
    </interactant>
    <interactant intactId="EBI-6371">
        <id>Q02642</id>
        <label>EGD1</label>
    </interactant>
    <organismsDiffer>false</organismsDiffer>
    <experiments>5</experiments>
</comment>
<comment type="interaction">
    <interactant intactId="EBI-6379">
        <id>P38879</id>
    </interactant>
    <interactant intactId="EBI-19735">
        <id>P15731</id>
        <label>UBC4</label>
    </interactant>
    <organismsDiffer>false</organismsDiffer>
    <experiments>2</experiments>
</comment>
<comment type="subcellular location">
    <subcellularLocation>
        <location>Cytoplasm</location>
    </subcellularLocation>
    <subcellularLocation>
        <location>Nucleus</location>
    </subcellularLocation>
    <text>Predominantly cytoplasmic, may also transiently localize to the nucleus. Nuclear import may occur via redundant pathways including one requiring the karyopherins PSE1 and KAP123, which also participate in nuclear import of ribosomal subunits.</text>
</comment>
<comment type="domain">
    <text>The UBA domain is required for the stability of EGD1.</text>
</comment>
<comment type="PTM">
    <text evidence="8">Ubiquitinated by the NOT4 E3 ligase and the UBC4 E2 ubiquitin conjugation enzyme.</text>
</comment>
<comment type="miscellaneous">
    <text evidence="7">Present with 38016 molecules/cell in log phase SD medium.</text>
</comment>
<comment type="similarity">
    <text evidence="11">Belongs to the NAC-alpha family.</text>
</comment>
<name>NACA_YEAST</name>
<gene>
    <name type="primary">EGD2</name>
    <name type="ordered locus">YHR193C</name>
</gene>
<organism>
    <name type="scientific">Saccharomyces cerevisiae (strain ATCC 204508 / S288c)</name>
    <name type="common">Baker's yeast</name>
    <dbReference type="NCBI Taxonomy" id="559292"/>
    <lineage>
        <taxon>Eukaryota</taxon>
        <taxon>Fungi</taxon>
        <taxon>Dikarya</taxon>
        <taxon>Ascomycota</taxon>
        <taxon>Saccharomycotina</taxon>
        <taxon>Saccharomycetes</taxon>
        <taxon>Saccharomycetales</taxon>
        <taxon>Saccharomycetaceae</taxon>
        <taxon>Saccharomyces</taxon>
    </lineage>
</organism>
<dbReference type="EMBL" id="U17134">
    <property type="protein sequence ID" value="AAA92080.1"/>
    <property type="molecule type" value="Genomic_DNA"/>
</dbReference>
<dbReference type="EMBL" id="U00030">
    <property type="protein sequence ID" value="AAB68367.1"/>
    <property type="molecule type" value="Genomic_DNA"/>
</dbReference>
<dbReference type="EMBL" id="AY558288">
    <property type="protein sequence ID" value="AAS56614.1"/>
    <property type="molecule type" value="Genomic_DNA"/>
</dbReference>
<dbReference type="EMBL" id="L12222">
    <property type="protein sequence ID" value="AAC15849.1"/>
    <property type="molecule type" value="mRNA"/>
</dbReference>
<dbReference type="EMBL" id="BK006934">
    <property type="protein sequence ID" value="DAA06885.1"/>
    <property type="molecule type" value="Genomic_DNA"/>
</dbReference>
<dbReference type="PIR" id="S46689">
    <property type="entry name" value="S46689"/>
</dbReference>
<dbReference type="RefSeq" id="NP_012063.3">
    <property type="nucleotide sequence ID" value="NM_001179324.3"/>
</dbReference>
<dbReference type="SMR" id="P38879"/>
<dbReference type="BioGRID" id="36627">
    <property type="interactions" value="334"/>
</dbReference>
<dbReference type="ComplexPortal" id="CPX-1306">
    <property type="entry name" value="Nascent polypeptide-associated complex, EGD1-EGD2 variant"/>
</dbReference>
<dbReference type="ComplexPortal" id="CPX-1307">
    <property type="entry name" value="Nascent polypeptide-associated complex, BTT1-EGD2 variant"/>
</dbReference>
<dbReference type="DIP" id="DIP-2098N"/>
<dbReference type="FunCoup" id="P38879">
    <property type="interactions" value="739"/>
</dbReference>
<dbReference type="IntAct" id="P38879">
    <property type="interactions" value="65"/>
</dbReference>
<dbReference type="MINT" id="P38879"/>
<dbReference type="STRING" id="4932.YHR193C"/>
<dbReference type="iPTMnet" id="P38879"/>
<dbReference type="PaxDb" id="4932-YHR193C"/>
<dbReference type="PeptideAtlas" id="P38879"/>
<dbReference type="TopDownProteomics" id="P38879"/>
<dbReference type="EnsemblFungi" id="YHR193C_mRNA">
    <property type="protein sequence ID" value="YHR193C"/>
    <property type="gene ID" value="YHR193C"/>
</dbReference>
<dbReference type="GeneID" id="856600"/>
<dbReference type="KEGG" id="sce:YHR193C"/>
<dbReference type="AGR" id="SGD:S000001236"/>
<dbReference type="SGD" id="S000001236">
    <property type="gene designation" value="EGD2"/>
</dbReference>
<dbReference type="VEuPathDB" id="FungiDB:YHR193C"/>
<dbReference type="eggNOG" id="KOG2239">
    <property type="taxonomic scope" value="Eukaryota"/>
</dbReference>
<dbReference type="GeneTree" id="ENSGT00940000175567"/>
<dbReference type="HOGENOM" id="CLU_057806_2_1_1"/>
<dbReference type="InParanoid" id="P38879"/>
<dbReference type="OMA" id="SQKMIFA"/>
<dbReference type="OrthoDB" id="3169036at2759"/>
<dbReference type="BioCyc" id="YEAST:G3O-31221-MONOMER"/>
<dbReference type="BioGRID-ORCS" id="856600">
    <property type="hits" value="9 hits in 10 CRISPR screens"/>
</dbReference>
<dbReference type="ChiTaRS" id="EGD2">
    <property type="organism name" value="yeast"/>
</dbReference>
<dbReference type="PRO" id="PR:P38879"/>
<dbReference type="Proteomes" id="UP000002311">
    <property type="component" value="Chromosome VIII"/>
</dbReference>
<dbReference type="RNAct" id="P38879">
    <property type="molecule type" value="protein"/>
</dbReference>
<dbReference type="GO" id="GO:0005737">
    <property type="term" value="C:cytoplasm"/>
    <property type="evidence" value="ECO:0000314"/>
    <property type="project" value="ComplexPortal"/>
</dbReference>
<dbReference type="GO" id="GO:0005854">
    <property type="term" value="C:nascent polypeptide-associated complex"/>
    <property type="evidence" value="ECO:0000314"/>
    <property type="project" value="SGD"/>
</dbReference>
<dbReference type="GO" id="GO:0005634">
    <property type="term" value="C:nucleus"/>
    <property type="evidence" value="ECO:0007669"/>
    <property type="project" value="UniProtKB-SubCell"/>
</dbReference>
<dbReference type="GO" id="GO:0070300">
    <property type="term" value="F:phosphatidic acid binding"/>
    <property type="evidence" value="ECO:0000314"/>
    <property type="project" value="SGD"/>
</dbReference>
<dbReference type="GO" id="GO:0080025">
    <property type="term" value="F:phosphatidylinositol-3,5-bisphosphate binding"/>
    <property type="evidence" value="ECO:0000314"/>
    <property type="project" value="SGD"/>
</dbReference>
<dbReference type="GO" id="GO:0032266">
    <property type="term" value="F:phosphatidylinositol-3-phosphate binding"/>
    <property type="evidence" value="ECO:0000314"/>
    <property type="project" value="SGD"/>
</dbReference>
<dbReference type="GO" id="GO:0070273">
    <property type="term" value="F:phosphatidylinositol-4-phosphate binding"/>
    <property type="evidence" value="ECO:0000314"/>
    <property type="project" value="SGD"/>
</dbReference>
<dbReference type="GO" id="GO:0051082">
    <property type="term" value="F:unfolded protein binding"/>
    <property type="evidence" value="ECO:0000315"/>
    <property type="project" value="SGD"/>
</dbReference>
<dbReference type="GO" id="GO:0051083">
    <property type="term" value="P:'de novo' cotranslational protein folding"/>
    <property type="evidence" value="ECO:0000303"/>
    <property type="project" value="ComplexPortal"/>
</dbReference>
<dbReference type="GO" id="GO:0006613">
    <property type="term" value="P:cotranslational protein targeting to membrane"/>
    <property type="evidence" value="ECO:0000316"/>
    <property type="project" value="SGD"/>
</dbReference>
<dbReference type="GO" id="GO:0006612">
    <property type="term" value="P:protein targeting to membrane"/>
    <property type="evidence" value="ECO:0000318"/>
    <property type="project" value="GO_Central"/>
</dbReference>
<dbReference type="GO" id="GO:0015031">
    <property type="term" value="P:protein transport"/>
    <property type="evidence" value="ECO:0007669"/>
    <property type="project" value="UniProtKB-KW"/>
</dbReference>
<dbReference type="CDD" id="cd22054">
    <property type="entry name" value="NAC_NACA"/>
    <property type="match status" value="1"/>
</dbReference>
<dbReference type="CDD" id="cd14278">
    <property type="entry name" value="UBA_NAC_like"/>
    <property type="match status" value="1"/>
</dbReference>
<dbReference type="FunFam" id="2.20.70.30:FF:000002">
    <property type="entry name" value="Nascent polypeptide-associated complex (NAC), alpha subunit"/>
    <property type="match status" value="1"/>
</dbReference>
<dbReference type="Gene3D" id="1.10.8.10">
    <property type="entry name" value="DNA helicase RuvA subunit, C-terminal domain"/>
    <property type="match status" value="1"/>
</dbReference>
<dbReference type="Gene3D" id="2.20.70.30">
    <property type="entry name" value="Nascent polypeptide-associated complex domain"/>
    <property type="match status" value="1"/>
</dbReference>
<dbReference type="InterPro" id="IPR016641">
    <property type="entry name" value="EGD2/NACA0like"/>
</dbReference>
<dbReference type="InterPro" id="IPR044034">
    <property type="entry name" value="NAC-like_UBA"/>
</dbReference>
<dbReference type="InterPro" id="IPR038187">
    <property type="entry name" value="NAC_A/B_dom_sf"/>
</dbReference>
<dbReference type="InterPro" id="IPR002715">
    <property type="entry name" value="Nas_poly-pep-assoc_cplx_dom"/>
</dbReference>
<dbReference type="InterPro" id="IPR009060">
    <property type="entry name" value="UBA-like_sf"/>
</dbReference>
<dbReference type="PANTHER" id="PTHR21713">
    <property type="entry name" value="NASCENT POLYPEPTIDE ASSOCIATED COMPLEX ALPHA SUBUNIT-RELATED"/>
    <property type="match status" value="1"/>
</dbReference>
<dbReference type="Pfam" id="PF01849">
    <property type="entry name" value="NAC"/>
    <property type="match status" value="1"/>
</dbReference>
<dbReference type="Pfam" id="PF19026">
    <property type="entry name" value="UBA_HYPK"/>
    <property type="match status" value="1"/>
</dbReference>
<dbReference type="PIRSF" id="PIRSF015901">
    <property type="entry name" value="NAC_alpha"/>
    <property type="match status" value="1"/>
</dbReference>
<dbReference type="SMART" id="SM01407">
    <property type="entry name" value="NAC"/>
    <property type="match status" value="1"/>
</dbReference>
<dbReference type="SUPFAM" id="SSF46934">
    <property type="entry name" value="UBA-like"/>
    <property type="match status" value="1"/>
</dbReference>
<dbReference type="PROSITE" id="PS51151">
    <property type="entry name" value="NAC_AB"/>
    <property type="match status" value="1"/>
</dbReference>
<proteinExistence type="evidence at protein level"/>
<feature type="initiator methionine" description="Removed" evidence="10 13">
    <location>
        <position position="1"/>
    </location>
</feature>
<feature type="chain" id="PRO_0000135594" description="Nascent polypeptide-associated complex subunit alpha">
    <location>
        <begin position="2"/>
        <end position="174"/>
    </location>
</feature>
<feature type="domain" description="NAC-A/B" evidence="1">
    <location>
        <begin position="15"/>
        <end position="73"/>
    </location>
</feature>
<feature type="domain" description="UBA">
    <location>
        <begin position="135"/>
        <end position="174"/>
    </location>
</feature>
<feature type="region of interest" description="Disordered" evidence="2">
    <location>
        <begin position="85"/>
        <end position="137"/>
    </location>
</feature>
<feature type="compositionally biased region" description="Low complexity" evidence="2">
    <location>
        <begin position="111"/>
        <end position="120"/>
    </location>
</feature>
<feature type="compositionally biased region" description="Acidic residues" evidence="2">
    <location>
        <begin position="121"/>
        <end position="132"/>
    </location>
</feature>
<feature type="modified residue" description="N-acetylserine" evidence="10 13">
    <location>
        <position position="2"/>
    </location>
</feature>
<feature type="modified residue" description="Phosphoserine" evidence="12">
    <location>
        <position position="93"/>
    </location>
</feature>
<sequence>MSAIPENANVTVLNKNEKKARELIGKLGLKQIPGIIRVTFRKKDNQIYAIEKPEVFRSAGGNYVVFGEAKVDNFTQKLAAAQQQAQASGIMPSNEDVATKSPEDIQADMQAAAEGSVNAAAEEDDEEGEVDAGDLNKDDIELVVQQTNVSKNQAIKALKAHNGDLVNAIMSLSK</sequence>
<protein>
    <recommendedName>
        <fullName>Nascent polypeptide-associated complex subunit alpha</fullName>
        <shortName>NAC-alpha</shortName>
    </recommendedName>
    <alternativeName>
        <fullName>Alpha-NAC</fullName>
    </alternativeName>
    <alternativeName>
        <fullName>GAL4 DNA-binding enhancer protein 2</fullName>
    </alternativeName>
</protein>
<accession>P38879</accession>
<accession>D3DLE1</accession>
<reference key="1">
    <citation type="journal article" date="1995" name="Gene">
        <title>The yeast EGD2 gene encodes a homologue of the alpha NAC subunit of the human nascent-polypeptide-associated complex.</title>
        <authorList>
            <person name="Shi X."/>
            <person name="Parthun M.R."/>
            <person name="Jaehning J.A."/>
        </authorList>
    </citation>
    <scope>NUCLEOTIDE SEQUENCE [GENOMIC DNA]</scope>
</reference>
<reference key="2">
    <citation type="journal article" date="1994" name="Science">
        <title>Complete nucleotide sequence of Saccharomyces cerevisiae chromosome VIII.</title>
        <authorList>
            <person name="Johnston M."/>
            <person name="Andrews S."/>
            <person name="Brinkman R."/>
            <person name="Cooper J."/>
            <person name="Ding H."/>
            <person name="Dover J."/>
            <person name="Du Z."/>
            <person name="Favello A."/>
            <person name="Fulton L."/>
            <person name="Gattung S."/>
            <person name="Geisel C."/>
            <person name="Kirsten J."/>
            <person name="Kucaba T."/>
            <person name="Hillier L.W."/>
            <person name="Jier M."/>
            <person name="Johnston L."/>
            <person name="Langston Y."/>
            <person name="Latreille P."/>
            <person name="Louis E.J."/>
            <person name="Macri C."/>
            <person name="Mardis E."/>
            <person name="Menezes S."/>
            <person name="Mouser L."/>
            <person name="Nhan M."/>
            <person name="Rifkin L."/>
            <person name="Riles L."/>
            <person name="St Peter H."/>
            <person name="Trevaskis E."/>
            <person name="Vaughan K."/>
            <person name="Vignati D."/>
            <person name="Wilcox L."/>
            <person name="Wohldman P."/>
            <person name="Waterston R."/>
            <person name="Wilson R."/>
            <person name="Vaudin M."/>
        </authorList>
    </citation>
    <scope>NUCLEOTIDE SEQUENCE [LARGE SCALE GENOMIC DNA]</scope>
    <source>
        <strain>ATCC 204508 / S288c</strain>
    </source>
</reference>
<reference key="3">
    <citation type="journal article" date="2014" name="G3 (Bethesda)">
        <title>The reference genome sequence of Saccharomyces cerevisiae: Then and now.</title>
        <authorList>
            <person name="Engel S.R."/>
            <person name="Dietrich F.S."/>
            <person name="Fisk D.G."/>
            <person name="Binkley G."/>
            <person name="Balakrishnan R."/>
            <person name="Costanzo M.C."/>
            <person name="Dwight S.S."/>
            <person name="Hitz B.C."/>
            <person name="Karra K."/>
            <person name="Nash R.S."/>
            <person name="Weng S."/>
            <person name="Wong E.D."/>
            <person name="Lloyd P."/>
            <person name="Skrzypek M.S."/>
            <person name="Miyasato S.R."/>
            <person name="Simison M."/>
            <person name="Cherry J.M."/>
        </authorList>
    </citation>
    <scope>GENOME REANNOTATION</scope>
    <source>
        <strain>ATCC 204508 / S288c</strain>
    </source>
</reference>
<reference key="4">
    <citation type="journal article" date="2007" name="Genome Res.">
        <title>Approaching a complete repository of sequence-verified protein-encoding clones for Saccharomyces cerevisiae.</title>
        <authorList>
            <person name="Hu Y."/>
            <person name="Rolfs A."/>
            <person name="Bhullar B."/>
            <person name="Murthy T.V.S."/>
            <person name="Zhu C."/>
            <person name="Berger M.F."/>
            <person name="Camargo A.A."/>
            <person name="Kelley F."/>
            <person name="McCarron S."/>
            <person name="Jepson D."/>
            <person name="Richardson A."/>
            <person name="Raphael J."/>
            <person name="Moreira D."/>
            <person name="Taycher E."/>
            <person name="Zuo D."/>
            <person name="Mohr S."/>
            <person name="Kane M.F."/>
            <person name="Williamson J."/>
            <person name="Simpson A.J.G."/>
            <person name="Bulyk M.L."/>
            <person name="Harlow E."/>
            <person name="Marsischky G."/>
            <person name="Kolodner R.D."/>
            <person name="LaBaer J."/>
        </authorList>
    </citation>
    <scope>NUCLEOTIDE SEQUENCE [GENOMIC DNA]</scope>
    <source>
        <strain>ATCC 204508 / S288c</strain>
    </source>
</reference>
<reference key="5">
    <citation type="submission" date="2005-05" db="UniProtKB">
        <authorList>
            <person name="Bienvenut W.V."/>
            <person name="Peters C."/>
        </authorList>
    </citation>
    <scope>PROTEIN SEQUENCE OF 2-19 AND 58-70</scope>
    <scope>CLEAVAGE OF INITIATOR METHIONINE</scope>
    <scope>ACETYLATION AT SER-2</scope>
    <scope>IDENTIFICATION BY MASS SPECTROMETRY</scope>
</reference>
<reference key="6">
    <citation type="journal article" date="1993" name="J. Biol. Chem.">
        <title>Saccharomyces cerevisiae cytoplasmic tyrosyl-tRNA synthetase gene. Isolation by complementation of a mutant Escherichia coli suppressor tRNA defective in aminoacylation and sequence analysis.</title>
        <authorList>
            <person name="Chow C.M."/>
            <person name="RajBhandary U.L."/>
        </authorList>
    </citation>
    <scope>NUCLEOTIDE SEQUENCE [MRNA] OF 5-174</scope>
</reference>
<reference key="7">
    <citation type="journal article" date="1998" name="Proc. Natl. Acad. Sci. U.S.A.">
        <title>The yeast nascent polypeptide-associated complex initiates protein targeting to mitochondria in vivo.</title>
        <authorList>
            <person name="George R."/>
            <person name="Beddoe T."/>
            <person name="Landl K."/>
            <person name="Lithgow T."/>
        </authorList>
    </citation>
    <scope>FUNCTION</scope>
    <scope>INTERACTION WITH RIBOSOMES</scope>
</reference>
<reference key="8">
    <citation type="journal article" date="1999" name="FEBS Lett.">
        <title>The nascent polypeptide-associated complex (NAC) of yeast functions in the targeting process of ribosomes to the ER membrane.</title>
        <authorList>
            <person name="Wiedmann B."/>
            <person name="Prehn S."/>
        </authorList>
    </citation>
    <scope>FUNCTION</scope>
    <scope>INTERACTION WITH RIBOSOMES</scope>
</reference>
<reference key="9">
    <citation type="journal article" date="1999" name="Mol. Biol. Cell">
        <title>Nascent polypeptide-associated complex stimulates protein import into yeast mitochondria.</title>
        <authorList>
            <person name="Fuenfschilling U."/>
            <person name="Rospert S."/>
        </authorList>
    </citation>
    <scope>FUNCTION</scope>
    <scope>INTERACTION WITH EGD1 AND RIBOSOMES</scope>
    <scope>IDENTIFICATION BY MASS SPECTROMETRY</scope>
</reference>
<reference key="10">
    <citation type="journal article" date="1999" name="Yeast">
        <title>Initial characterization of the nascent polypeptide-associated complex in yeast.</title>
        <authorList>
            <person name="Reimann B."/>
            <person name="Bradsher J."/>
            <person name="Franke J."/>
            <person name="Hartmann E."/>
            <person name="Wiedmann M."/>
            <person name="Prehn S."/>
            <person name="Wiedmann B."/>
        </authorList>
    </citation>
    <scope>FUNCTION</scope>
    <scope>INTERACTION WITH EGD1; BTT1 AND RIBOSOMES</scope>
</reference>
<reference key="11">
    <citation type="journal article" date="2001" name="J. Cell Sci.">
        <title>Evidence for a nuclear passage of nascent polypeptide-associated complex subunits in yeast.</title>
        <authorList>
            <person name="Franke J."/>
            <person name="Reimann B."/>
            <person name="Hartmann E."/>
            <person name="Koehler M."/>
            <person name="Wiedmann B."/>
        </authorList>
    </citation>
    <scope>SUBCELLULAR LOCATION</scope>
</reference>
<reference key="12">
    <citation type="journal article" date="2002" name="FEBS Lett.">
        <title>The nascent polypeptide-associated complex (NAC) promotes interaction of ribosomes with the mitochondrial surface in vivo.</title>
        <authorList>
            <person name="George R."/>
            <person name="Walsh P."/>
            <person name="Beddoe T."/>
            <person name="Lithgow T."/>
        </authorList>
    </citation>
    <scope>FUNCTION</scope>
    <scope>INTERACTION WITH RIBOSOMES</scope>
</reference>
<reference key="13">
    <citation type="journal article" date="2003" name="Nature">
        <title>Global analysis of protein localization in budding yeast.</title>
        <authorList>
            <person name="Huh W.-K."/>
            <person name="Falvo J.V."/>
            <person name="Gerke L.C."/>
            <person name="Carroll A.S."/>
            <person name="Howson R.W."/>
            <person name="Weissman J.S."/>
            <person name="O'Shea E.K."/>
        </authorList>
    </citation>
    <scope>SUBCELLULAR LOCATION [LARGE SCALE ANALYSIS]</scope>
</reference>
<reference key="14">
    <citation type="journal article" date="2003" name="Nature">
        <title>Global analysis of protein expression in yeast.</title>
        <authorList>
            <person name="Ghaemmaghami S."/>
            <person name="Huh W.-K."/>
            <person name="Bower K."/>
            <person name="Howson R.W."/>
            <person name="Belle A."/>
            <person name="Dephoure N."/>
            <person name="O'Shea E.K."/>
            <person name="Weissman J.S."/>
        </authorList>
    </citation>
    <scope>LEVEL OF PROTEIN EXPRESSION [LARGE SCALE ANALYSIS]</scope>
</reference>
<reference key="15">
    <citation type="journal article" date="2006" name="J. Biol. Chem.">
        <title>The yeast Ccr4-Not complex controls ubiquitination of the nascent-associated polypeptide (NAC-EGD) complex.</title>
        <authorList>
            <person name="Panasenko O."/>
            <person name="Landrieux E."/>
            <person name="Feuermann M."/>
            <person name="Finka A."/>
            <person name="Paquet N."/>
            <person name="Collart M.A."/>
        </authorList>
    </citation>
    <scope>FUNCTION</scope>
    <scope>ASSOCIATION WITH THE CCR4-NOT COMPLEX</scope>
    <scope>INTERACTION WITH EGD2</scope>
    <scope>UBIQUITINATION</scope>
    <scope>SUBCELLULAR LOCATION</scope>
</reference>
<reference key="16">
    <citation type="journal article" date="2009" name="Science">
        <title>Global analysis of Cdk1 substrate phosphorylation sites provides insights into evolution.</title>
        <authorList>
            <person name="Holt L.J."/>
            <person name="Tuch B.B."/>
            <person name="Villen J."/>
            <person name="Johnson A.D."/>
            <person name="Gygi S.P."/>
            <person name="Morgan D.O."/>
        </authorList>
    </citation>
    <scope>PHOSPHORYLATION [LARGE SCALE ANALYSIS] AT SER-93</scope>
    <scope>IDENTIFICATION BY MASS SPECTROMETRY [LARGE SCALE ANALYSIS]</scope>
</reference>
<reference key="17">
    <citation type="journal article" date="2012" name="Proc. Natl. Acad. Sci. U.S.A.">
        <title>N-terminal acetylome analyses and functional insights of the N-terminal acetyltransferase NatB.</title>
        <authorList>
            <person name="Van Damme P."/>
            <person name="Lasa M."/>
            <person name="Polevoda B."/>
            <person name="Gazquez C."/>
            <person name="Elosegui-Artola A."/>
            <person name="Kim D.S."/>
            <person name="De Juan-Pardo E."/>
            <person name="Demeyer K."/>
            <person name="Hole K."/>
            <person name="Larrea E."/>
            <person name="Timmerman E."/>
            <person name="Prieto J."/>
            <person name="Arnesen T."/>
            <person name="Sherman F."/>
            <person name="Gevaert K."/>
            <person name="Aldabe R."/>
        </authorList>
    </citation>
    <scope>ACETYLATION [LARGE SCALE ANALYSIS] AT SER-2</scope>
    <scope>CLEAVAGE OF INITIATOR METHIONINE [LARGE SCALE ANALYSIS]</scope>
    <scope>IDENTIFICATION BY MASS SPECTROMETRY [LARGE SCALE ANALYSIS]</scope>
</reference>